<accession>I1RE72</accession>
<accession>A0A098D6S9</accession>
<keyword id="KW-1003">Cell membrane</keyword>
<keyword id="KW-0325">Glycoprotein</keyword>
<keyword id="KW-0328">Glycosyltransferase</keyword>
<keyword id="KW-0472">Membrane</keyword>
<keyword id="KW-1185">Reference proteome</keyword>
<keyword id="KW-0808">Transferase</keyword>
<keyword id="KW-0812">Transmembrane</keyword>
<keyword id="KW-1133">Transmembrane helix</keyword>
<keyword id="KW-0843">Virulence</keyword>
<organism>
    <name type="scientific">Gibberella zeae (strain ATCC MYA-4620 / CBS 123657 / FGSC 9075 / NRRL 31084 / PH-1)</name>
    <name type="common">Wheat head blight fungus</name>
    <name type="synonym">Fusarium graminearum</name>
    <dbReference type="NCBI Taxonomy" id="229533"/>
    <lineage>
        <taxon>Eukaryota</taxon>
        <taxon>Fungi</taxon>
        <taxon>Dikarya</taxon>
        <taxon>Ascomycota</taxon>
        <taxon>Pezizomycotina</taxon>
        <taxon>Sordariomycetes</taxon>
        <taxon>Hypocreomycetidae</taxon>
        <taxon>Hypocreales</taxon>
        <taxon>Nectriaceae</taxon>
        <taxon>Fusarium</taxon>
    </lineage>
</organism>
<protein>
    <recommendedName>
        <fullName evidence="6">Chitin synthase 6</fullName>
        <ecNumber evidence="8">2.4.1.16</ecNumber>
    </recommendedName>
    <alternativeName>
        <fullName evidence="7">Chitin-UDP acetyl-glucosaminyl transferase 6</fullName>
    </alternativeName>
    <alternativeName>
        <fullName evidence="6">Class-VII chitin synthase 6</fullName>
    </alternativeName>
</protein>
<gene>
    <name evidence="6" type="primary">CHS6</name>
    <name type="ORF">FGRAMPH1_01T04707</name>
</gene>
<sequence length="775" mass="88391">MHKNSLLGQIIYTSIMSAVLLMACLEWFLWLAAFLYCLVKVFQKSEHWSINVLCIIVGTAFVLLRVIFLPIMVVTLPLPDAIAKLWPEEMVSFLQWFAFWAFAILLTVPWLFCIYQVVTNQLGRTKRMKQVLDDVTAPKVVIVMPCYREEPEVLIKAINSVVDCDYPPSCIHVFLSFDGEEEDNLYLNTISQLGVLLKTESHPRSIDVKYRSARVTISRFPHGGKRHCQKVTFKLIDRVYEEYLKRNDNLFILFIDSDCILDKVCLQNFVYDMELSPGNTGEMLAMTGVITSTTKKHSIITLLQDMEYIHGQLFERTVESGCGSVTCLPGALTMLRFSAFRRMAKYYFVDKAEQCEDLFDFAKCHLGEDRWLTHLFMIGAKKRHQIQMCTSAFCKTEAVQSTRSLVKQRRRWFLGFITNEVCMLTDWRLWKRYPILILVRFMQNTIRTTALLFFVMVLAIMTTVKKVDDLPVGFIAISLGLNWMLMLYFGAKLRRFKIWLYPLMFILNPFYNWYYMVYGIFTAGQRTWGGPRADAAAADSHTTAREAAEQAEKQGDELNVVPETFKAAHEARRAASNRESTTTSELGRTKSVIRPPGKIDGKFSARQKTASGMYAHPDEMDISANDVEKGRRGTRGFFADRDSLDSISSAQNIDLGVSTPRRMKLLMNEEDLRKYQLGQQIQNRNSGIDDAEGIYRQPIRTPSAFPHAHSASANDIPLHDLGANDTAAQGSRSEDIQRFSEGRGIGTRADNGRSRNVGNSSFASRMAKRTPKTSR</sequence>
<evidence type="ECO:0000255" key="1"/>
<evidence type="ECO:0000255" key="2">
    <source>
        <dbReference type="PROSITE-ProRule" id="PRU00498"/>
    </source>
</evidence>
<evidence type="ECO:0000256" key="3">
    <source>
        <dbReference type="SAM" id="MobiDB-lite"/>
    </source>
</evidence>
<evidence type="ECO:0000269" key="4">
    <source>
    </source>
</evidence>
<evidence type="ECO:0000269" key="5">
    <source>
    </source>
</evidence>
<evidence type="ECO:0000303" key="6">
    <source>
    </source>
</evidence>
<evidence type="ECO:0000305" key="7"/>
<evidence type="ECO:0000305" key="8">
    <source>
    </source>
</evidence>
<feature type="chain" id="PRO_0000460798" description="Chitin synthase 6">
    <location>
        <begin position="1"/>
        <end position="775"/>
    </location>
</feature>
<feature type="transmembrane region" description="Helical" evidence="1">
    <location>
        <begin position="19"/>
        <end position="39"/>
    </location>
</feature>
<feature type="transmembrane region" description="Helical" evidence="1">
    <location>
        <begin position="54"/>
        <end position="74"/>
    </location>
</feature>
<feature type="transmembrane region" description="Helical" evidence="1">
    <location>
        <begin position="94"/>
        <end position="114"/>
    </location>
</feature>
<feature type="transmembrane region" description="Helical" evidence="1">
    <location>
        <begin position="441"/>
        <end position="461"/>
    </location>
</feature>
<feature type="transmembrane region" description="Helical" evidence="1">
    <location>
        <begin position="470"/>
        <end position="490"/>
    </location>
</feature>
<feature type="transmembrane region" description="Helical" evidence="1">
    <location>
        <begin position="498"/>
        <end position="518"/>
    </location>
</feature>
<feature type="region of interest" description="Disordered" evidence="3">
    <location>
        <begin position="532"/>
        <end position="603"/>
    </location>
</feature>
<feature type="region of interest" description="Disordered" evidence="3">
    <location>
        <begin position="702"/>
        <end position="775"/>
    </location>
</feature>
<feature type="compositionally biased region" description="Low complexity" evidence="3">
    <location>
        <begin position="532"/>
        <end position="541"/>
    </location>
</feature>
<feature type="compositionally biased region" description="Basic and acidic residues" evidence="3">
    <location>
        <begin position="542"/>
        <end position="556"/>
    </location>
</feature>
<feature type="compositionally biased region" description="Polar residues" evidence="3">
    <location>
        <begin position="577"/>
        <end position="586"/>
    </location>
</feature>
<feature type="compositionally biased region" description="Low complexity" evidence="3">
    <location>
        <begin position="702"/>
        <end position="713"/>
    </location>
</feature>
<feature type="compositionally biased region" description="Basic and acidic residues" evidence="3">
    <location>
        <begin position="732"/>
        <end position="741"/>
    </location>
</feature>
<feature type="compositionally biased region" description="Polar residues" evidence="3">
    <location>
        <begin position="754"/>
        <end position="763"/>
    </location>
</feature>
<feature type="compositionally biased region" description="Basic residues" evidence="3">
    <location>
        <begin position="766"/>
        <end position="775"/>
    </location>
</feature>
<feature type="glycosylation site" description="N-linked (GlcNAc...) asparagine" evidence="2">
    <location>
        <position position="724"/>
    </location>
</feature>
<feature type="glycosylation site" description="N-linked (GlcNAc...) asparagine" evidence="2">
    <location>
        <position position="759"/>
    </location>
</feature>
<proteinExistence type="evidence at transcript level"/>
<name>CHS6_GIBZE</name>
<reference key="1">
    <citation type="journal article" date="2007" name="Science">
        <title>The Fusarium graminearum genome reveals a link between localized polymorphism and pathogen specialization.</title>
        <authorList>
            <person name="Cuomo C.A."/>
            <person name="Gueldener U."/>
            <person name="Xu J.-R."/>
            <person name="Trail F."/>
            <person name="Turgeon B.G."/>
            <person name="Di Pietro A."/>
            <person name="Walton J.D."/>
            <person name="Ma L.-J."/>
            <person name="Baker S.E."/>
            <person name="Rep M."/>
            <person name="Adam G."/>
            <person name="Antoniw J."/>
            <person name="Baldwin T."/>
            <person name="Calvo S.E."/>
            <person name="Chang Y.-L."/>
            <person name="DeCaprio D."/>
            <person name="Gale L.R."/>
            <person name="Gnerre S."/>
            <person name="Goswami R.S."/>
            <person name="Hammond-Kosack K."/>
            <person name="Harris L.J."/>
            <person name="Hilburn K."/>
            <person name="Kennell J.C."/>
            <person name="Kroken S."/>
            <person name="Magnuson J.K."/>
            <person name="Mannhaupt G."/>
            <person name="Mauceli E.W."/>
            <person name="Mewes H.-W."/>
            <person name="Mitterbauer R."/>
            <person name="Muehlbauer G."/>
            <person name="Muensterkoetter M."/>
            <person name="Nelson D."/>
            <person name="O'Donnell K."/>
            <person name="Ouellet T."/>
            <person name="Qi W."/>
            <person name="Quesneville H."/>
            <person name="Roncero M.I.G."/>
            <person name="Seong K.-Y."/>
            <person name="Tetko I.V."/>
            <person name="Urban M."/>
            <person name="Waalwijk C."/>
            <person name="Ward T.J."/>
            <person name="Yao J."/>
            <person name="Birren B.W."/>
            <person name="Kistler H.C."/>
        </authorList>
    </citation>
    <scope>NUCLEOTIDE SEQUENCE [LARGE SCALE GENOMIC DNA]</scope>
    <source>
        <strain>ATCC MYA-4620 / CBS 123657 / FGSC 9075 / NRRL 31084 / PH-1</strain>
    </source>
</reference>
<reference key="2">
    <citation type="journal article" date="2010" name="Nature">
        <title>Comparative genomics reveals mobile pathogenicity chromosomes in Fusarium.</title>
        <authorList>
            <person name="Ma L.-J."/>
            <person name="van der Does H.C."/>
            <person name="Borkovich K.A."/>
            <person name="Coleman J.J."/>
            <person name="Daboussi M.-J."/>
            <person name="Di Pietro A."/>
            <person name="Dufresne M."/>
            <person name="Freitag M."/>
            <person name="Grabherr M."/>
            <person name="Henrissat B."/>
            <person name="Houterman P.M."/>
            <person name="Kang S."/>
            <person name="Shim W.-B."/>
            <person name="Woloshuk C."/>
            <person name="Xie X."/>
            <person name="Xu J.-R."/>
            <person name="Antoniw J."/>
            <person name="Baker S.E."/>
            <person name="Bluhm B.H."/>
            <person name="Breakspear A."/>
            <person name="Brown D.W."/>
            <person name="Butchko R.A.E."/>
            <person name="Chapman S."/>
            <person name="Coulson R."/>
            <person name="Coutinho P.M."/>
            <person name="Danchin E.G.J."/>
            <person name="Diener A."/>
            <person name="Gale L.R."/>
            <person name="Gardiner D.M."/>
            <person name="Goff S."/>
            <person name="Hammond-Kosack K.E."/>
            <person name="Hilburn K."/>
            <person name="Hua-Van A."/>
            <person name="Jonkers W."/>
            <person name="Kazan K."/>
            <person name="Kodira C.D."/>
            <person name="Koehrsen M."/>
            <person name="Kumar L."/>
            <person name="Lee Y.-H."/>
            <person name="Li L."/>
            <person name="Manners J.M."/>
            <person name="Miranda-Saavedra D."/>
            <person name="Mukherjee M."/>
            <person name="Park G."/>
            <person name="Park J."/>
            <person name="Park S.-Y."/>
            <person name="Proctor R.H."/>
            <person name="Regev A."/>
            <person name="Ruiz-Roldan M.C."/>
            <person name="Sain D."/>
            <person name="Sakthikumar S."/>
            <person name="Sykes S."/>
            <person name="Schwartz D.C."/>
            <person name="Turgeon B.G."/>
            <person name="Wapinski I."/>
            <person name="Yoder O."/>
            <person name="Young S."/>
            <person name="Zeng Q."/>
            <person name="Zhou S."/>
            <person name="Galagan J."/>
            <person name="Cuomo C.A."/>
            <person name="Kistler H.C."/>
            <person name="Rep M."/>
        </authorList>
    </citation>
    <scope>GENOME REANNOTATION</scope>
    <source>
        <strain>ATCC MYA-4620 / CBS 123657 / FGSC 9075 / NRRL 31084 / PH-1</strain>
    </source>
</reference>
<reference key="3">
    <citation type="journal article" date="2015" name="BMC Genomics">
        <title>The completed genome sequence of the pathogenic ascomycete fungus Fusarium graminearum.</title>
        <authorList>
            <person name="King R."/>
            <person name="Urban M."/>
            <person name="Hammond-Kosack M.C.U."/>
            <person name="Hassani-Pak K."/>
            <person name="Hammond-Kosack K.E."/>
        </authorList>
    </citation>
    <scope>NUCLEOTIDE SEQUENCE [LARGE SCALE GENOMIC DNA]</scope>
    <source>
        <strain>ATCC MYA-4620 / CBS 123657 / FGSC 9075 / NRRL 31084 / PH-1</strain>
    </source>
</reference>
<reference key="4">
    <citation type="journal article" date="2015" name="Plant Biotechnol. J.">
        <title>Host-induced gene silencing of an essential chitin synthase gene confers durable resistance to Fusarium head blight and seedling blight in wheat.</title>
        <authorList>
            <person name="Cheng W."/>
            <person name="Song X.S."/>
            <person name="Li H.P."/>
            <person name="Cao L.H."/>
            <person name="Sun K."/>
            <person name="Qiu X.L."/>
            <person name="Xu Y.B."/>
            <person name="Yang P."/>
            <person name="Huang T."/>
            <person name="Zhang J.B."/>
            <person name="Qu B."/>
            <person name="Liao Y.C."/>
        </authorList>
    </citation>
    <scope>FUNCTION</scope>
    <scope>DISRUPTION PHENOTYPE</scope>
</reference>
<reference key="5">
    <citation type="journal article" date="2016" name="Sci. Rep.">
        <title>The chitin synthase FgChs2 and other FgChss co-regulate vegetative development and virulence in F. graminearum.</title>
        <authorList>
            <person name="Liu Z."/>
            <person name="Zhang X."/>
            <person name="Liu X."/>
            <person name="Fu C."/>
            <person name="Han X."/>
            <person name="Yin Y."/>
            <person name="Ma Z."/>
        </authorList>
    </citation>
    <scope>FUNCTION</scope>
    <scope>INDUCTION</scope>
</reference>
<dbReference type="EC" id="2.4.1.16" evidence="8"/>
<dbReference type="EMBL" id="HG970332">
    <property type="protein sequence ID" value="CEF74160.1"/>
    <property type="molecule type" value="Genomic_DNA"/>
</dbReference>
<dbReference type="RefSeq" id="XP_011317804.1">
    <property type="nucleotide sequence ID" value="XM_011319502.1"/>
</dbReference>
<dbReference type="STRING" id="229533.I1RE72"/>
<dbReference type="KEGG" id="fgr:FGSG_01949"/>
<dbReference type="VEuPathDB" id="FungiDB:FGRAMPH1_01G04707"/>
<dbReference type="eggNOG" id="KOG2571">
    <property type="taxonomic scope" value="Eukaryota"/>
</dbReference>
<dbReference type="HOGENOM" id="CLU_012773_0_0_1"/>
<dbReference type="InParanoid" id="I1RE72"/>
<dbReference type="OrthoDB" id="116184at110618"/>
<dbReference type="Proteomes" id="UP000070720">
    <property type="component" value="Chromosome 1"/>
</dbReference>
<dbReference type="GO" id="GO:0030428">
    <property type="term" value="C:cell septum"/>
    <property type="evidence" value="ECO:0007669"/>
    <property type="project" value="TreeGrafter"/>
</dbReference>
<dbReference type="GO" id="GO:0005886">
    <property type="term" value="C:plasma membrane"/>
    <property type="evidence" value="ECO:0007669"/>
    <property type="project" value="UniProtKB-SubCell"/>
</dbReference>
<dbReference type="GO" id="GO:0004100">
    <property type="term" value="F:chitin synthase activity"/>
    <property type="evidence" value="ECO:0007669"/>
    <property type="project" value="UniProtKB-EC"/>
</dbReference>
<dbReference type="GO" id="GO:0006031">
    <property type="term" value="P:chitin biosynthetic process"/>
    <property type="evidence" value="ECO:0007669"/>
    <property type="project" value="TreeGrafter"/>
</dbReference>
<dbReference type="FunFam" id="3.90.550.10:FF:000077">
    <property type="entry name" value="Probable chitin synthase D"/>
    <property type="match status" value="1"/>
</dbReference>
<dbReference type="Gene3D" id="3.90.550.10">
    <property type="entry name" value="Spore Coat Polysaccharide Biosynthesis Protein SpsA, Chain A"/>
    <property type="match status" value="1"/>
</dbReference>
<dbReference type="InterPro" id="IPR004835">
    <property type="entry name" value="Chitin_synth"/>
</dbReference>
<dbReference type="InterPro" id="IPR029044">
    <property type="entry name" value="Nucleotide-diphossugar_trans"/>
</dbReference>
<dbReference type="PANTHER" id="PTHR22914">
    <property type="entry name" value="CHITIN SYNTHASE"/>
    <property type="match status" value="1"/>
</dbReference>
<dbReference type="PANTHER" id="PTHR22914:SF46">
    <property type="entry name" value="CHITIN SYNTHASE"/>
    <property type="match status" value="1"/>
</dbReference>
<dbReference type="Pfam" id="PF03142">
    <property type="entry name" value="Chitin_synth_2"/>
    <property type="match status" value="1"/>
</dbReference>
<dbReference type="SUPFAM" id="SSF53448">
    <property type="entry name" value="Nucleotide-diphospho-sugar transferases"/>
    <property type="match status" value="1"/>
</dbReference>
<dbReference type="PROSITE" id="PS51257">
    <property type="entry name" value="PROKAR_LIPOPROTEIN"/>
    <property type="match status" value="1"/>
</dbReference>
<comment type="function">
    <text evidence="5 8">Polymerizes chitin, a structural polymer of the cell wall and septum, by transferring the sugar moiety of UDP-GlcNAc to the non-reducing end of the growing chitin polymer (Probable). Shows additive effects in septum formation with CHS1, CHS2, CHS3A, CHS4, CHS5 and CHS7 (PubMed:27725723). Involved in virulence and mediates mycotoxin deoxinivalenol (DON) biosynthesis via the regulation of the expression of TRI4, TRI5 and TRI6 (PubMed:27725723).</text>
</comment>
<comment type="catalytic activity">
    <reaction evidence="8">
        <text>[(1-&gt;4)-N-acetyl-beta-D-glucosaminyl](n) + UDP-N-acetyl-alpha-D-glucosamine = [(1-&gt;4)-N-acetyl-beta-D-glucosaminyl](n+1) + UDP + H(+)</text>
        <dbReference type="Rhea" id="RHEA:16637"/>
        <dbReference type="Rhea" id="RHEA-COMP:9593"/>
        <dbReference type="Rhea" id="RHEA-COMP:9595"/>
        <dbReference type="ChEBI" id="CHEBI:15378"/>
        <dbReference type="ChEBI" id="CHEBI:17029"/>
        <dbReference type="ChEBI" id="CHEBI:57705"/>
        <dbReference type="ChEBI" id="CHEBI:58223"/>
        <dbReference type="EC" id="2.4.1.16"/>
    </reaction>
    <physiologicalReaction direction="left-to-right" evidence="8">
        <dbReference type="Rhea" id="RHEA:16638"/>
    </physiologicalReaction>
</comment>
<comment type="subcellular location">
    <subcellularLocation>
        <location evidence="7">Cell membrane</location>
        <topology evidence="1">Multi-pass membrane protein</topology>
    </subcellularLocation>
</comment>
<comment type="induction">
    <text evidence="5">Exhibits higher expression levels in hyphae than in germinating conidia (PubMed:27725723). Expression is increased in the absence of chitin synthase CHS2 (PubMed:27725723).</text>
</comment>
<comment type="disruption phenotype">
    <text evidence="4">Does not affect mycelial growth nor sensitivity to various stresses.</text>
</comment>
<comment type="similarity">
    <text evidence="7">Belongs to the chitin synthase family. Class VII subfamily.</text>
</comment>